<name>RNP1A_XENLA</name>
<accession>Q5XG24</accession>
<reference key="1">
    <citation type="submission" date="2004-10" db="EMBL/GenBank/DDBJ databases">
        <authorList>
            <consortium name="NIH - Xenopus Gene Collection (XGC) project"/>
        </authorList>
    </citation>
    <scope>NUCLEOTIDE SEQUENCE [LARGE SCALE MRNA]</scope>
    <source>
        <tissue>Embryo</tissue>
    </source>
</reference>
<organism>
    <name type="scientific">Xenopus laevis</name>
    <name type="common">African clawed frog</name>
    <dbReference type="NCBI Taxonomy" id="8355"/>
    <lineage>
        <taxon>Eukaryota</taxon>
        <taxon>Metazoa</taxon>
        <taxon>Chordata</taxon>
        <taxon>Craniata</taxon>
        <taxon>Vertebrata</taxon>
        <taxon>Euteleostomi</taxon>
        <taxon>Amphibia</taxon>
        <taxon>Batrachia</taxon>
        <taxon>Anura</taxon>
        <taxon>Pipoidea</taxon>
        <taxon>Pipidae</taxon>
        <taxon>Xenopodinae</taxon>
        <taxon>Xenopus</taxon>
        <taxon>Xenopus</taxon>
    </lineage>
</organism>
<feature type="chain" id="PRO_0000081821" description="RNA-binding protein with serine-rich domain 1-A">
    <location>
        <begin position="1"/>
        <end position="283"/>
    </location>
</feature>
<feature type="domain" description="RRM" evidence="2">
    <location>
        <begin position="161"/>
        <end position="240"/>
    </location>
</feature>
<feature type="region of interest" description="Disordered" evidence="3">
    <location>
        <begin position="1"/>
        <end position="140"/>
    </location>
</feature>
<feature type="region of interest" description="Disordered" evidence="3">
    <location>
        <begin position="221"/>
        <end position="283"/>
    </location>
</feature>
<feature type="compositionally biased region" description="Basic and acidic residues" evidence="3">
    <location>
        <begin position="10"/>
        <end position="36"/>
    </location>
</feature>
<feature type="compositionally biased region" description="Low complexity" evidence="3">
    <location>
        <begin position="45"/>
        <end position="103"/>
    </location>
</feature>
<feature type="compositionally biased region" description="Basic residues" evidence="3">
    <location>
        <begin position="104"/>
        <end position="120"/>
    </location>
</feature>
<feature type="compositionally biased region" description="Basic residues" evidence="3">
    <location>
        <begin position="128"/>
        <end position="140"/>
    </location>
</feature>
<feature type="compositionally biased region" description="Basic residues" evidence="3">
    <location>
        <begin position="244"/>
        <end position="276"/>
    </location>
</feature>
<dbReference type="EMBL" id="BC084646">
    <property type="protein sequence ID" value="AAH84646.1"/>
    <property type="molecule type" value="mRNA"/>
</dbReference>
<dbReference type="RefSeq" id="NP_001088379.1">
    <property type="nucleotide sequence ID" value="NM_001094910.1"/>
</dbReference>
<dbReference type="SMR" id="Q5XG24"/>
<dbReference type="DNASU" id="495230"/>
<dbReference type="GeneID" id="495230"/>
<dbReference type="KEGG" id="xla:495230"/>
<dbReference type="AGR" id="Xenbase:XB-GENE-941532"/>
<dbReference type="CTD" id="495230"/>
<dbReference type="Xenbase" id="XB-GENE-941532">
    <property type="gene designation" value="rnps1.S"/>
</dbReference>
<dbReference type="OrthoDB" id="252020at2759"/>
<dbReference type="Proteomes" id="UP000186698">
    <property type="component" value="Chromosome 9_10S"/>
</dbReference>
<dbReference type="Bgee" id="495230">
    <property type="expression patterns" value="Expressed in blastula and 19 other cell types or tissues"/>
</dbReference>
<dbReference type="GO" id="GO:0061574">
    <property type="term" value="C:ASAP complex"/>
    <property type="evidence" value="ECO:0000318"/>
    <property type="project" value="GO_Central"/>
</dbReference>
<dbReference type="GO" id="GO:0005737">
    <property type="term" value="C:cytoplasm"/>
    <property type="evidence" value="ECO:0000318"/>
    <property type="project" value="GO_Central"/>
</dbReference>
<dbReference type="GO" id="GO:0016607">
    <property type="term" value="C:nuclear speck"/>
    <property type="evidence" value="ECO:0007669"/>
    <property type="project" value="UniProtKB-SubCell"/>
</dbReference>
<dbReference type="GO" id="GO:0005654">
    <property type="term" value="C:nucleoplasm"/>
    <property type="evidence" value="ECO:0000318"/>
    <property type="project" value="GO_Central"/>
</dbReference>
<dbReference type="GO" id="GO:0003723">
    <property type="term" value="F:RNA binding"/>
    <property type="evidence" value="ECO:0007669"/>
    <property type="project" value="UniProtKB-KW"/>
</dbReference>
<dbReference type="GO" id="GO:0000398">
    <property type="term" value="P:mRNA splicing, via spliceosome"/>
    <property type="evidence" value="ECO:0000318"/>
    <property type="project" value="GO_Central"/>
</dbReference>
<dbReference type="CDD" id="cd12365">
    <property type="entry name" value="RRM_RNPS1"/>
    <property type="match status" value="1"/>
</dbReference>
<dbReference type="Gene3D" id="3.30.70.330">
    <property type="match status" value="1"/>
</dbReference>
<dbReference type="InterPro" id="IPR012677">
    <property type="entry name" value="Nucleotide-bd_a/b_plait_sf"/>
</dbReference>
<dbReference type="InterPro" id="IPR035979">
    <property type="entry name" value="RBD_domain_sf"/>
</dbReference>
<dbReference type="InterPro" id="IPR034201">
    <property type="entry name" value="RNPS1_RRM"/>
</dbReference>
<dbReference type="InterPro" id="IPR000504">
    <property type="entry name" value="RRM_dom"/>
</dbReference>
<dbReference type="PANTHER" id="PTHR15481">
    <property type="entry name" value="RIBONUCLEIC ACID BINDING PROTEIN S1"/>
    <property type="match status" value="1"/>
</dbReference>
<dbReference type="PANTHER" id="PTHR15481:SF2">
    <property type="entry name" value="RNA-BINDING PROTEIN WITH SERINE-RICH DOMAIN 1"/>
    <property type="match status" value="1"/>
</dbReference>
<dbReference type="Pfam" id="PF00076">
    <property type="entry name" value="RRM_1"/>
    <property type="match status" value="1"/>
</dbReference>
<dbReference type="SMART" id="SM00360">
    <property type="entry name" value="RRM"/>
    <property type="match status" value="1"/>
</dbReference>
<dbReference type="SUPFAM" id="SSF54928">
    <property type="entry name" value="RNA-binding domain, RBD"/>
    <property type="match status" value="1"/>
</dbReference>
<dbReference type="PROSITE" id="PS50102">
    <property type="entry name" value="RRM"/>
    <property type="match status" value="1"/>
</dbReference>
<keyword id="KW-0963">Cytoplasm</keyword>
<keyword id="KW-0507">mRNA processing</keyword>
<keyword id="KW-0508">mRNA splicing</keyword>
<keyword id="KW-0539">Nucleus</keyword>
<keyword id="KW-1185">Reference proteome</keyword>
<keyword id="KW-0694">RNA-binding</keyword>
<evidence type="ECO:0000250" key="1"/>
<evidence type="ECO:0000255" key="2">
    <source>
        <dbReference type="PROSITE-ProRule" id="PRU00176"/>
    </source>
</evidence>
<evidence type="ECO:0000256" key="3">
    <source>
        <dbReference type="SAM" id="MobiDB-lite"/>
    </source>
</evidence>
<evidence type="ECO:0000305" key="4"/>
<gene>
    <name type="primary">rnps1-a</name>
</gene>
<comment type="function">
    <text evidence="1">Component of a splicing-dependent multiprotein exon junction complex (EJC) deposited at splice junction on mRNAs. The EJC is a dynamic structure consisting of a few core proteins and several more peripheral nuclear and cytoplasmic associated factors that join the complex only transiently either during EJC assembly or during subsequent mRNA metabolism. Putative component of the spliceosome which enhances the formation of the ATP-dependent A complex of the spliceosome. May participate in mRNA 3'-end cleavage. Also mediates increase of mRNA abundance and translational efficiency (By similarity).</text>
</comment>
<comment type="subunit">
    <text evidence="1">Component of the active spliceosome.</text>
</comment>
<comment type="subcellular location">
    <subcellularLocation>
        <location evidence="1">Nucleus</location>
    </subcellularLocation>
    <subcellularLocation>
        <location evidence="1">Nucleus speckle</location>
    </subcellularLocation>
    <subcellularLocation>
        <location evidence="1">Cytoplasm</location>
    </subcellularLocation>
    <text evidence="1">Nucleocytoplasmic shuttling protein.</text>
</comment>
<comment type="similarity">
    <text evidence="4">Belongs to the splicing factor SR family.</text>
</comment>
<proteinExistence type="evidence at transcript level"/>
<protein>
    <recommendedName>
        <fullName>RNA-binding protein with serine-rich domain 1-A</fullName>
    </recommendedName>
</protein>
<sequence length="283" mass="31805">MAPSPSKRKERSEDRAKERGKEKAPGKEVTEKDRGRDKAKKRRSGSSGSSSSSHSRSSSSSSSSSGSSSGSSSGSSSSASSRSGSSSSSRSSSSSSSSGSPSPSRRRHDNRRRSRSKSKQPKRDEKERKRRSPSPRPTKVHIGRLTRNVTKDHILEIFSTYGKIKMIDMPVDRYHPHLSKGYAYVEFEAPEEAEKALKHMDGGQIDGQEITASAVLTPWPMRPMPRRFSPPRRMLPPPPMWRRSPPRMRRRSRSPRRRSPVRRRSRSPARRRHRSRSSSNSSR</sequence>